<comment type="function">
    <text>Essential for growth. Interacts with MglA to control social gliding motility.</text>
</comment>
<comment type="catalytic activity">
    <reaction evidence="4">
        <text>L-tyrosyl-[protein] + ATP = O-phospho-L-tyrosyl-[protein] + ADP + H(+)</text>
        <dbReference type="Rhea" id="RHEA:10596"/>
        <dbReference type="Rhea" id="RHEA-COMP:10136"/>
        <dbReference type="Rhea" id="RHEA-COMP:20101"/>
        <dbReference type="ChEBI" id="CHEBI:15378"/>
        <dbReference type="ChEBI" id="CHEBI:30616"/>
        <dbReference type="ChEBI" id="CHEBI:46858"/>
        <dbReference type="ChEBI" id="CHEBI:61978"/>
        <dbReference type="ChEBI" id="CHEBI:456216"/>
        <dbReference type="EC" id="2.7.10.2"/>
    </reaction>
</comment>
<comment type="subunit">
    <text evidence="6">Interacts with MglA.</text>
</comment>
<comment type="subcellular location">
    <subcellularLocation>
        <location evidence="7">Cell inner membrane</location>
        <topology evidence="7">Single-pass membrane protein</topology>
    </subcellularLocation>
</comment>
<comment type="PTM">
    <text evidence="1">Autophosphorylated.</text>
</comment>
<comment type="similarity">
    <text evidence="3">Belongs to the protein kinase superfamily. Tyr protein kinase family.</text>
</comment>
<reference key="1">
    <citation type="journal article" date="1989" name="J. Bacteriol.">
        <title>Gliding motility in Myxococcus xanthus: mgl locus, RNA, and predicted protein products.</title>
        <authorList>
            <person name="Stephens K."/>
            <person name="Hartzell P.L."/>
            <person name="Kaiser D."/>
        </authorList>
    </citation>
    <scope>NUCLEOTIDE SEQUENCE [GENOMIC DNA]</scope>
</reference>
<reference key="2">
    <citation type="journal article" date="2006" name="Proc. Natl. Acad. Sci. U.S.A.">
        <title>Evolution of sensory complexity recorded in a myxobacterial genome.</title>
        <authorList>
            <person name="Goldman B.S."/>
            <person name="Nierman W.C."/>
            <person name="Kaiser D."/>
            <person name="Slater S.C."/>
            <person name="Durkin A.S."/>
            <person name="Eisen J.A."/>
            <person name="Ronning C.M."/>
            <person name="Barbazuk W.B."/>
            <person name="Blanchard M."/>
            <person name="Field C."/>
            <person name="Halling C."/>
            <person name="Hinkle G."/>
            <person name="Iartchuk O."/>
            <person name="Kim H.S."/>
            <person name="Mackenzie C."/>
            <person name="Madupu R."/>
            <person name="Miller N."/>
            <person name="Shvartsbeyn A."/>
            <person name="Sullivan S.A."/>
            <person name="Vaudin M."/>
            <person name="Wiegand R."/>
            <person name="Kaplan H.B."/>
        </authorList>
    </citation>
    <scope>NUCLEOTIDE SEQUENCE [LARGE SCALE GENOMIC DNA]</scope>
    <source>
        <strain>DK1622</strain>
    </source>
</reference>
<reference key="3">
    <citation type="journal article" date="2002" name="Mol. Microbiol.">
        <title>MglA, a small GTPase, interacts with a tyrosine kinase to control type IV pili-mediated motility and development of Myxococcus xanthus.</title>
        <authorList>
            <person name="Thomasson B."/>
            <person name="Link J."/>
            <person name="Stassinopoulos A.G."/>
            <person name="Burke N."/>
            <person name="Plamann L."/>
            <person name="Hartzell P.L."/>
        </authorList>
    </citation>
    <scope>CHARACTERIZATION</scope>
    <scope>INTERACTION WITH MGLA</scope>
</reference>
<organism>
    <name type="scientific">Myxococcus xanthus (strain DK1622)</name>
    <dbReference type="NCBI Taxonomy" id="246197"/>
    <lineage>
        <taxon>Bacteria</taxon>
        <taxon>Pseudomonadati</taxon>
        <taxon>Myxococcota</taxon>
        <taxon>Myxococcia</taxon>
        <taxon>Myxococcales</taxon>
        <taxon>Cystobacterineae</taxon>
        <taxon>Myxococcaceae</taxon>
        <taxon>Myxococcus</taxon>
    </lineage>
</organism>
<dbReference type="EC" id="2.7.10.2"/>
<dbReference type="EMBL" id="AF377950">
    <property type="protein sequence ID" value="AAK54653.1"/>
    <property type="molecule type" value="Genomic_DNA"/>
</dbReference>
<dbReference type="EMBL" id="CP000113">
    <property type="protein sequence ID" value="ABF90801.1"/>
    <property type="molecule type" value="Genomic_DNA"/>
</dbReference>
<dbReference type="RefSeq" id="WP_011552028.1">
    <property type="nucleotide sequence ID" value="NC_008095.1"/>
</dbReference>
<dbReference type="SMR" id="Q1DB00"/>
<dbReference type="STRING" id="246197.MXAN_1929"/>
<dbReference type="EnsemblBacteria" id="ABF90801">
    <property type="protein sequence ID" value="ABF90801"/>
    <property type="gene ID" value="MXAN_1929"/>
</dbReference>
<dbReference type="GeneID" id="41359343"/>
<dbReference type="KEGG" id="mxa:MXAN_1929"/>
<dbReference type="eggNOG" id="COG0515">
    <property type="taxonomic scope" value="Bacteria"/>
</dbReference>
<dbReference type="HOGENOM" id="CLU_000288_151_5_7"/>
<dbReference type="OrthoDB" id="9801841at2"/>
<dbReference type="Proteomes" id="UP000002402">
    <property type="component" value="Chromosome"/>
</dbReference>
<dbReference type="GO" id="GO:0005886">
    <property type="term" value="C:plasma membrane"/>
    <property type="evidence" value="ECO:0007669"/>
    <property type="project" value="UniProtKB-SubCell"/>
</dbReference>
<dbReference type="GO" id="GO:0005524">
    <property type="term" value="F:ATP binding"/>
    <property type="evidence" value="ECO:0007669"/>
    <property type="project" value="UniProtKB-KW"/>
</dbReference>
<dbReference type="GO" id="GO:0004715">
    <property type="term" value="F:non-membrane spanning protein tyrosine kinase activity"/>
    <property type="evidence" value="ECO:0007669"/>
    <property type="project" value="UniProtKB-EC"/>
</dbReference>
<dbReference type="GO" id="GO:0004674">
    <property type="term" value="F:protein serine/threonine kinase activity"/>
    <property type="evidence" value="ECO:0007669"/>
    <property type="project" value="TreeGrafter"/>
</dbReference>
<dbReference type="CDD" id="cd14014">
    <property type="entry name" value="STKc_PknB_like"/>
    <property type="match status" value="1"/>
</dbReference>
<dbReference type="Gene3D" id="3.30.200.20">
    <property type="entry name" value="Phosphorylase Kinase, domain 1"/>
    <property type="match status" value="1"/>
</dbReference>
<dbReference type="Gene3D" id="1.10.510.10">
    <property type="entry name" value="Transferase(Phosphotransferase) domain 1"/>
    <property type="match status" value="1"/>
</dbReference>
<dbReference type="InterPro" id="IPR011009">
    <property type="entry name" value="Kinase-like_dom_sf"/>
</dbReference>
<dbReference type="InterPro" id="IPR049806">
    <property type="entry name" value="MasK-like_C"/>
</dbReference>
<dbReference type="InterPro" id="IPR000719">
    <property type="entry name" value="Prot_kinase_dom"/>
</dbReference>
<dbReference type="InterPro" id="IPR008266">
    <property type="entry name" value="Tyr_kinase_AS"/>
</dbReference>
<dbReference type="NCBIfam" id="NF033768">
    <property type="entry name" value="myxo_SS_tail"/>
    <property type="match status" value="1"/>
</dbReference>
<dbReference type="PANTHER" id="PTHR43289">
    <property type="entry name" value="MITOGEN-ACTIVATED PROTEIN KINASE KINASE KINASE 20-RELATED"/>
    <property type="match status" value="1"/>
</dbReference>
<dbReference type="PANTHER" id="PTHR43289:SF6">
    <property type="entry name" value="SERINE_THREONINE-PROTEIN KINASE NEKL-3"/>
    <property type="match status" value="1"/>
</dbReference>
<dbReference type="Pfam" id="PF00069">
    <property type="entry name" value="Pkinase"/>
    <property type="match status" value="1"/>
</dbReference>
<dbReference type="SUPFAM" id="SSF56112">
    <property type="entry name" value="Protein kinase-like (PK-like)"/>
    <property type="match status" value="1"/>
</dbReference>
<dbReference type="PROSITE" id="PS50011">
    <property type="entry name" value="PROTEIN_KINASE_DOM"/>
    <property type="match status" value="1"/>
</dbReference>
<dbReference type="PROSITE" id="PS00109">
    <property type="entry name" value="PROTEIN_KINASE_TYR"/>
    <property type="match status" value="1"/>
</dbReference>
<gene>
    <name type="primary">masK</name>
    <name type="ordered locus">MXAN_1929</name>
</gene>
<keyword id="KW-0067">ATP-binding</keyword>
<keyword id="KW-0997">Cell inner membrane</keyword>
<keyword id="KW-1003">Cell membrane</keyword>
<keyword id="KW-0418">Kinase</keyword>
<keyword id="KW-0472">Membrane</keyword>
<keyword id="KW-0547">Nucleotide-binding</keyword>
<keyword id="KW-1185">Reference proteome</keyword>
<keyword id="KW-0808">Transferase</keyword>
<keyword id="KW-0812">Transmembrane</keyword>
<keyword id="KW-1133">Transmembrane helix</keyword>
<keyword id="KW-0829">Tyrosine-protein kinase</keyword>
<feature type="chain" id="PRO_0000282835" description="Tyrosine-protein kinase MasK">
    <location>
        <begin position="1"/>
        <end position="646"/>
    </location>
</feature>
<feature type="topological domain" description="Periplasmic" evidence="2">
    <location>
        <begin position="1"/>
        <end position="415"/>
    </location>
</feature>
<feature type="transmembrane region" description="Helical" evidence="2">
    <location>
        <begin position="416"/>
        <end position="433"/>
    </location>
</feature>
<feature type="topological domain" description="Cytoplasmic" evidence="2">
    <location>
        <begin position="434"/>
        <end position="646"/>
    </location>
</feature>
<feature type="domain" description="Protein kinase" evidence="3">
    <location>
        <begin position="25"/>
        <end position="300"/>
    </location>
</feature>
<feature type="region of interest" description="Disordered" evidence="5">
    <location>
        <begin position="373"/>
        <end position="410"/>
    </location>
</feature>
<feature type="region of interest" description="Disordered" evidence="5">
    <location>
        <begin position="521"/>
        <end position="547"/>
    </location>
</feature>
<feature type="compositionally biased region" description="Acidic residues" evidence="5">
    <location>
        <begin position="527"/>
        <end position="536"/>
    </location>
</feature>
<feature type="active site" description="Proton acceptor" evidence="3 4">
    <location>
        <position position="163"/>
    </location>
</feature>
<feature type="binding site" evidence="3">
    <location>
        <begin position="31"/>
        <end position="39"/>
    </location>
    <ligand>
        <name>ATP</name>
        <dbReference type="ChEBI" id="CHEBI:30616"/>
    </ligand>
</feature>
<feature type="binding site" evidence="3">
    <location>
        <position position="57"/>
    </location>
    <ligand>
        <name>ATP</name>
        <dbReference type="ChEBI" id="CHEBI:30616"/>
    </ligand>
</feature>
<name>MASK_MYXXD</name>
<accession>Q1DB00</accession>
<accession>Q93S46</accession>
<proteinExistence type="evidence at protein level"/>
<protein>
    <recommendedName>
        <fullName>Tyrosine-protein kinase MasK</fullName>
        <ecNumber>2.7.10.2</ecNumber>
    </recommendedName>
</protein>
<evidence type="ECO:0000250" key="1"/>
<evidence type="ECO:0000255" key="2"/>
<evidence type="ECO:0000255" key="3">
    <source>
        <dbReference type="PROSITE-ProRule" id="PRU00159"/>
    </source>
</evidence>
<evidence type="ECO:0000255" key="4">
    <source>
        <dbReference type="PROSITE-ProRule" id="PRU10028"/>
    </source>
</evidence>
<evidence type="ECO:0000256" key="5">
    <source>
        <dbReference type="SAM" id="MobiDB-lite"/>
    </source>
</evidence>
<evidence type="ECO:0000269" key="6">
    <source>
    </source>
</evidence>
<evidence type="ECO:0000305" key="7"/>
<sequence>MSPPQTTLPVTEAGLVPLLQPYGPYVLVRKLAEGGMAEIFLAKLLGADGFERNVVIKRMLPHLTNNPDFVEMFRDEARLAAKLAHPNIVQIQELGFAEGCYYICMEYLAGEDFSTTLRLAGRKRHYVPLPVVLRVLIDAARGLHFAHEFTNEAGQPLNVVHRDISPSNLYLTYQGQVKVLDFGIAKAESRLVNTRTGVVKGKYMYMAPEQARGKEVDRRADIFALGVSLYEALTHVRPFSRENDLAVLNALLQGELKPPRELRPDLPEELEAILLKAMAFKPEDRYPTAEAFADALETFLSEHLSGSGAMPLGAFLKGHFGEERFTERSRIPTLATLTATYGGAAAGAQGQAPGAEPHGTNLYGVLAREGDATSAQRPGMSMRPSSPGVPAHGAASRGSTSPESAPTAGGRRWRTLAVGLAGGLMLAAAGIVGYRQWMTTPASVSLVPATVPVVEAVAPEAAAAQVGAPMEAVAPVGAAAQAGSLTDAVANGAGGDVGETDSAQLSVDAAGVTETDEAGLAGAASDVEAEADEEGADAAPVRSKKASSQKRVTLGIDDVQRVVSRGRARITTCFERYKADLPSSQGEVQVQLTIVSSGKVRAGTRGPLASSGVGRCLEAQAERLRFPPHRDQEVTVVMPFSWRVTQ</sequence>